<reference key="1">
    <citation type="journal article" date="2003" name="Proc. Natl. Acad. Sci. U.S.A.">
        <title>The complete genome sequence of the carcinogenic bacterium Helicobacter hepaticus.</title>
        <authorList>
            <person name="Suerbaum S."/>
            <person name="Josenhans C."/>
            <person name="Sterzenbach T."/>
            <person name="Drescher B."/>
            <person name="Brandt P."/>
            <person name="Bell M."/>
            <person name="Droege M."/>
            <person name="Fartmann B."/>
            <person name="Fischer H.-P."/>
            <person name="Ge Z."/>
            <person name="Hoerster A."/>
            <person name="Holland R."/>
            <person name="Klein K."/>
            <person name="Koenig J."/>
            <person name="Macko L."/>
            <person name="Mendz G.L."/>
            <person name="Nyakatura G."/>
            <person name="Schauer D.B."/>
            <person name="Shen Z."/>
            <person name="Weber J."/>
            <person name="Frosch M."/>
            <person name="Fox J.G."/>
        </authorList>
    </citation>
    <scope>NUCLEOTIDE SEQUENCE [LARGE SCALE GENOMIC DNA]</scope>
    <source>
        <strain>ATCC 51449 / 3B1</strain>
    </source>
</reference>
<keyword id="KW-0028">Amino-acid biosynthesis</keyword>
<keyword id="KW-0057">Aromatic amino acid biosynthesis</keyword>
<keyword id="KW-0170">Cobalt</keyword>
<keyword id="KW-0963">Cytoplasm</keyword>
<keyword id="KW-0456">Lyase</keyword>
<keyword id="KW-0479">Metal-binding</keyword>
<keyword id="KW-0520">NAD</keyword>
<keyword id="KW-0547">Nucleotide-binding</keyword>
<keyword id="KW-1185">Reference proteome</keyword>
<keyword id="KW-0862">Zinc</keyword>
<gene>
    <name evidence="1" type="primary">aroB</name>
    <name type="ordered locus">HH_0882</name>
</gene>
<dbReference type="EC" id="4.2.3.4" evidence="1"/>
<dbReference type="EMBL" id="AE017125">
    <property type="protein sequence ID" value="AAP77479.1"/>
    <property type="molecule type" value="Genomic_DNA"/>
</dbReference>
<dbReference type="RefSeq" id="WP_011115722.1">
    <property type="nucleotide sequence ID" value="NC_004917.1"/>
</dbReference>
<dbReference type="SMR" id="Q7VHT1"/>
<dbReference type="STRING" id="235279.HH_0882"/>
<dbReference type="KEGG" id="hhe:HH_0882"/>
<dbReference type="eggNOG" id="COG0337">
    <property type="taxonomic scope" value="Bacteria"/>
</dbReference>
<dbReference type="HOGENOM" id="CLU_001201_0_2_7"/>
<dbReference type="OrthoDB" id="9806583at2"/>
<dbReference type="UniPathway" id="UPA00053">
    <property type="reaction ID" value="UER00085"/>
</dbReference>
<dbReference type="Proteomes" id="UP000002495">
    <property type="component" value="Chromosome"/>
</dbReference>
<dbReference type="GO" id="GO:0005737">
    <property type="term" value="C:cytoplasm"/>
    <property type="evidence" value="ECO:0007669"/>
    <property type="project" value="UniProtKB-SubCell"/>
</dbReference>
<dbReference type="GO" id="GO:0003856">
    <property type="term" value="F:3-dehydroquinate synthase activity"/>
    <property type="evidence" value="ECO:0007669"/>
    <property type="project" value="UniProtKB-UniRule"/>
</dbReference>
<dbReference type="GO" id="GO:0046872">
    <property type="term" value="F:metal ion binding"/>
    <property type="evidence" value="ECO:0007669"/>
    <property type="project" value="UniProtKB-KW"/>
</dbReference>
<dbReference type="GO" id="GO:0000166">
    <property type="term" value="F:nucleotide binding"/>
    <property type="evidence" value="ECO:0007669"/>
    <property type="project" value="UniProtKB-KW"/>
</dbReference>
<dbReference type="GO" id="GO:0008652">
    <property type="term" value="P:amino acid biosynthetic process"/>
    <property type="evidence" value="ECO:0007669"/>
    <property type="project" value="UniProtKB-KW"/>
</dbReference>
<dbReference type="GO" id="GO:0009073">
    <property type="term" value="P:aromatic amino acid family biosynthetic process"/>
    <property type="evidence" value="ECO:0007669"/>
    <property type="project" value="UniProtKB-KW"/>
</dbReference>
<dbReference type="GO" id="GO:0009423">
    <property type="term" value="P:chorismate biosynthetic process"/>
    <property type="evidence" value="ECO:0007669"/>
    <property type="project" value="UniProtKB-UniRule"/>
</dbReference>
<dbReference type="CDD" id="cd08195">
    <property type="entry name" value="DHQS"/>
    <property type="match status" value="1"/>
</dbReference>
<dbReference type="FunFam" id="3.40.50.1970:FF:000007">
    <property type="entry name" value="Pentafunctional AROM polypeptide"/>
    <property type="match status" value="1"/>
</dbReference>
<dbReference type="Gene3D" id="3.40.50.1970">
    <property type="match status" value="1"/>
</dbReference>
<dbReference type="Gene3D" id="1.20.1090.10">
    <property type="entry name" value="Dehydroquinate synthase-like - alpha domain"/>
    <property type="match status" value="1"/>
</dbReference>
<dbReference type="HAMAP" id="MF_00110">
    <property type="entry name" value="DHQ_synthase"/>
    <property type="match status" value="1"/>
</dbReference>
<dbReference type="InterPro" id="IPR050071">
    <property type="entry name" value="Dehydroquinate_synthase"/>
</dbReference>
<dbReference type="InterPro" id="IPR016037">
    <property type="entry name" value="DHQ_synth_AroB"/>
</dbReference>
<dbReference type="InterPro" id="IPR030963">
    <property type="entry name" value="DHQ_synth_fam"/>
</dbReference>
<dbReference type="InterPro" id="IPR030960">
    <property type="entry name" value="DHQS/DOIS_N"/>
</dbReference>
<dbReference type="InterPro" id="IPR056179">
    <property type="entry name" value="DHQS_C"/>
</dbReference>
<dbReference type="NCBIfam" id="TIGR01357">
    <property type="entry name" value="aroB"/>
    <property type="match status" value="1"/>
</dbReference>
<dbReference type="PANTHER" id="PTHR43622">
    <property type="entry name" value="3-DEHYDROQUINATE SYNTHASE"/>
    <property type="match status" value="1"/>
</dbReference>
<dbReference type="PANTHER" id="PTHR43622:SF7">
    <property type="entry name" value="3-DEHYDROQUINATE SYNTHASE, CHLOROPLASTIC"/>
    <property type="match status" value="1"/>
</dbReference>
<dbReference type="Pfam" id="PF01761">
    <property type="entry name" value="DHQ_synthase"/>
    <property type="match status" value="1"/>
</dbReference>
<dbReference type="Pfam" id="PF24621">
    <property type="entry name" value="DHQS_C"/>
    <property type="match status" value="1"/>
</dbReference>
<dbReference type="PIRSF" id="PIRSF001455">
    <property type="entry name" value="DHQ_synth"/>
    <property type="match status" value="1"/>
</dbReference>
<dbReference type="SUPFAM" id="SSF56796">
    <property type="entry name" value="Dehydroquinate synthase-like"/>
    <property type="match status" value="1"/>
</dbReference>
<organism>
    <name type="scientific">Helicobacter hepaticus (strain ATCC 51449 / 3B1)</name>
    <dbReference type="NCBI Taxonomy" id="235279"/>
    <lineage>
        <taxon>Bacteria</taxon>
        <taxon>Pseudomonadati</taxon>
        <taxon>Campylobacterota</taxon>
        <taxon>Epsilonproteobacteria</taxon>
        <taxon>Campylobacterales</taxon>
        <taxon>Helicobacteraceae</taxon>
        <taxon>Helicobacter</taxon>
    </lineage>
</organism>
<comment type="function">
    <text evidence="1">Catalyzes the conversion of 3-deoxy-D-arabino-heptulosonate 7-phosphate (DAHP) to dehydroquinate (DHQ).</text>
</comment>
<comment type="catalytic activity">
    <reaction evidence="1">
        <text>7-phospho-2-dehydro-3-deoxy-D-arabino-heptonate = 3-dehydroquinate + phosphate</text>
        <dbReference type="Rhea" id="RHEA:21968"/>
        <dbReference type="ChEBI" id="CHEBI:32364"/>
        <dbReference type="ChEBI" id="CHEBI:43474"/>
        <dbReference type="ChEBI" id="CHEBI:58394"/>
        <dbReference type="EC" id="4.2.3.4"/>
    </reaction>
</comment>
<comment type="cofactor">
    <cofactor evidence="1">
        <name>NAD(+)</name>
        <dbReference type="ChEBI" id="CHEBI:57540"/>
    </cofactor>
</comment>
<comment type="cofactor">
    <cofactor evidence="1">
        <name>Co(2+)</name>
        <dbReference type="ChEBI" id="CHEBI:48828"/>
    </cofactor>
    <cofactor evidence="1">
        <name>Zn(2+)</name>
        <dbReference type="ChEBI" id="CHEBI:29105"/>
    </cofactor>
    <text evidence="1">Binds 1 divalent metal cation per subunit. Can use either Co(2+) or Zn(2+).</text>
</comment>
<comment type="pathway">
    <text evidence="1">Metabolic intermediate biosynthesis; chorismate biosynthesis; chorismate from D-erythrose 4-phosphate and phosphoenolpyruvate: step 2/7.</text>
</comment>
<comment type="subcellular location">
    <subcellularLocation>
        <location evidence="1">Cytoplasm</location>
    </subcellularLocation>
</comment>
<comment type="similarity">
    <text evidence="1">Belongs to the sugar phosphate cyclases superfamily. Dehydroquinate synthase family.</text>
</comment>
<evidence type="ECO:0000255" key="1">
    <source>
        <dbReference type="HAMAP-Rule" id="MF_00110"/>
    </source>
</evidence>
<proteinExistence type="inferred from homology"/>
<sequence>MSEILHIQTATSNYPIHIGILPHIEYAHKVLLVSNPKVAGLHLKYVLERIKAPEVYVCIVPDGEQYKDMKSIEYILECAFTHRLDRKSLMIALGGGVIGDMVGFASGIYQRGIDFIQIPTTLLAQVDASVGGKTGINNTFGKNLIGLFHQPKAVYIDPFMLSTLPKREFGAGVAEIIKMAVCFDEAFFILLQEQILSINDNDFLTRAIAKSVAIKAQVVNADEKEQGIRAALNYGHTFGHIIENLTQYSQFLHGEAVSIGMCMANALSCKLGLLTKEQKDAISALLERYDLPTHFYIQNALDFYEKFSLDKKSVNAKIMFVLPCGIGNVSLRNDVPKADVLDVLSSFSKDSGK</sequence>
<feature type="chain" id="PRO_0000140744" description="3-dehydroquinate synthase">
    <location>
        <begin position="1"/>
        <end position="353"/>
    </location>
</feature>
<feature type="binding site" evidence="1">
    <location>
        <begin position="62"/>
        <end position="67"/>
    </location>
    <ligand>
        <name>NAD(+)</name>
        <dbReference type="ChEBI" id="CHEBI:57540"/>
    </ligand>
</feature>
<feature type="binding site" evidence="1">
    <location>
        <begin position="96"/>
        <end position="100"/>
    </location>
    <ligand>
        <name>NAD(+)</name>
        <dbReference type="ChEBI" id="CHEBI:57540"/>
    </ligand>
</feature>
<feature type="binding site" evidence="1">
    <location>
        <begin position="120"/>
        <end position="121"/>
    </location>
    <ligand>
        <name>NAD(+)</name>
        <dbReference type="ChEBI" id="CHEBI:57540"/>
    </ligand>
</feature>
<feature type="binding site" evidence="1">
    <location>
        <position position="133"/>
    </location>
    <ligand>
        <name>NAD(+)</name>
        <dbReference type="ChEBI" id="CHEBI:57540"/>
    </ligand>
</feature>
<feature type="binding site" evidence="1">
    <location>
        <position position="142"/>
    </location>
    <ligand>
        <name>NAD(+)</name>
        <dbReference type="ChEBI" id="CHEBI:57540"/>
    </ligand>
</feature>
<feature type="binding site" evidence="1">
    <location>
        <position position="175"/>
    </location>
    <ligand>
        <name>Zn(2+)</name>
        <dbReference type="ChEBI" id="CHEBI:29105"/>
    </ligand>
</feature>
<feature type="binding site" evidence="1">
    <location>
        <position position="236"/>
    </location>
    <ligand>
        <name>Zn(2+)</name>
        <dbReference type="ChEBI" id="CHEBI:29105"/>
    </ligand>
</feature>
<feature type="binding site" evidence="1">
    <location>
        <position position="253"/>
    </location>
    <ligand>
        <name>Zn(2+)</name>
        <dbReference type="ChEBI" id="CHEBI:29105"/>
    </ligand>
</feature>
<accession>Q7VHT1</accession>
<name>AROB_HELHP</name>
<protein>
    <recommendedName>
        <fullName evidence="1">3-dehydroquinate synthase</fullName>
        <shortName evidence="1">DHQS</shortName>
        <ecNumber evidence="1">4.2.3.4</ecNumber>
    </recommendedName>
</protein>